<sequence length="741" mass="83621">MEFIYKYAWIVPFLPLSASVPIGLGSLFFPGATKSVRRTWALISIFLLSVAMFLSFNLFLQQITGGPIYRYFWSWVINNKFSLELGYLIDPLTSIMLVLVTTVGTMVMIYSDNYMSHDKTYVRFFAYLNFFNASMLGLVISPNLLQIYIFWELVGMCSYLLIGFWFTRPSAANACQKAFITNRAGDFGLLLGILGFYWVTGSFEFQYLSEKLNELTAIDGVGSFFVTSCAFLLFLGPVAKSAQFPLHVWLPDAMEGPTPISALIHAATMVAAGIFLVARLFPLFKALPLIMYLISWIGGITALLGATMALAQKDLKRGLAYSTMSQLGYMMLALGIDSYRIALFHLITHAYSKALLFLGSGSVIHSMEPIVGYCPRKSQNMALMGGLRKYMPITGITFLLGTLSLSGIPPFACFWSKDQILSDSKLYSPIFGGITWFTAGLTAFYMFRMYLLTFEGDFRVNLVNSYNNHITLYSTSMWGEEESRILNRTRADSMSNQIIGRNNSFSKEAFQISNKMEGLYKKNRGLVVTYPFFYKGSFAYPKESGKAMLFPLVVLGIFTLFVGLIGVPFFRSGMRYDILSQWFASSTAPFDKKHPENWSEFFIDAIPSVGIAFLGILIACILYRPIYFLSQDVYHKTNPHMKIIMDQSINIIYNWSFYQAYIDIYYDIILIKGIRGLAETSHSFDQWAIDGIPNGVGFLGLFVGEGMRCLGGGRISSYIFFSLFCVLISILIYYYSFSFYP</sequence>
<organism>
    <name type="scientific">Cryptomeria japonica</name>
    <name type="common">Japanese cedar</name>
    <name type="synonym">Cupressus japonica</name>
    <dbReference type="NCBI Taxonomy" id="3369"/>
    <lineage>
        <taxon>Eukaryota</taxon>
        <taxon>Viridiplantae</taxon>
        <taxon>Streptophyta</taxon>
        <taxon>Embryophyta</taxon>
        <taxon>Tracheophyta</taxon>
        <taxon>Spermatophyta</taxon>
        <taxon>Pinopsida</taxon>
        <taxon>Pinidae</taxon>
        <taxon>Conifers II</taxon>
        <taxon>Cupressales</taxon>
        <taxon>Cupressaceae</taxon>
        <taxon>Cryptomeria</taxon>
    </lineage>
</organism>
<comment type="function">
    <text evidence="1">NDH shuttles electrons from NAD(P)H:plastoquinone, via FMN and iron-sulfur (Fe-S) centers, to quinones in the photosynthetic chain and possibly in a chloroplast respiratory chain. The immediate electron acceptor for the enzyme in this species is believed to be plastoquinone. Couples the redox reaction to proton translocation, and thus conserves the redox energy in a proton gradient (By similarity).</text>
</comment>
<comment type="catalytic activity">
    <reaction>
        <text>a plastoquinone + NADH + (n+1) H(+)(in) = a plastoquinol + NAD(+) + n H(+)(out)</text>
        <dbReference type="Rhea" id="RHEA:42608"/>
        <dbReference type="Rhea" id="RHEA-COMP:9561"/>
        <dbReference type="Rhea" id="RHEA-COMP:9562"/>
        <dbReference type="ChEBI" id="CHEBI:15378"/>
        <dbReference type="ChEBI" id="CHEBI:17757"/>
        <dbReference type="ChEBI" id="CHEBI:57540"/>
        <dbReference type="ChEBI" id="CHEBI:57945"/>
        <dbReference type="ChEBI" id="CHEBI:62192"/>
    </reaction>
</comment>
<comment type="catalytic activity">
    <reaction>
        <text>a plastoquinone + NADPH + (n+1) H(+)(in) = a plastoquinol + NADP(+) + n H(+)(out)</text>
        <dbReference type="Rhea" id="RHEA:42612"/>
        <dbReference type="Rhea" id="RHEA-COMP:9561"/>
        <dbReference type="Rhea" id="RHEA-COMP:9562"/>
        <dbReference type="ChEBI" id="CHEBI:15378"/>
        <dbReference type="ChEBI" id="CHEBI:17757"/>
        <dbReference type="ChEBI" id="CHEBI:57783"/>
        <dbReference type="ChEBI" id="CHEBI:58349"/>
        <dbReference type="ChEBI" id="CHEBI:62192"/>
    </reaction>
</comment>
<comment type="subunit">
    <text evidence="1">NDH is composed of at least 16 different subunits, 5 of which are encoded in the nucleus.</text>
</comment>
<comment type="subcellular location">
    <subcellularLocation>
        <location evidence="1">Plastid</location>
        <location evidence="1">Chloroplast thylakoid membrane</location>
        <topology evidence="1">Multi-pass membrane protein</topology>
    </subcellularLocation>
</comment>
<comment type="similarity">
    <text evidence="3">Belongs to the complex I subunit 5 family.</text>
</comment>
<evidence type="ECO:0000250" key="1"/>
<evidence type="ECO:0000255" key="2"/>
<evidence type="ECO:0000305" key="3"/>
<dbReference type="EC" id="7.1.1.-"/>
<dbReference type="EMBL" id="AP009377">
    <property type="protein sequence ID" value="BAG16704.1"/>
    <property type="molecule type" value="Genomic_DNA"/>
</dbReference>
<dbReference type="RefSeq" id="YP_001806706.1">
    <property type="nucleotide sequence ID" value="NC_010548.1"/>
</dbReference>
<dbReference type="SMR" id="B1VKJ3"/>
<dbReference type="GeneID" id="6166618"/>
<dbReference type="KEGG" id="cjf:6166618"/>
<dbReference type="OrthoDB" id="543408at2759"/>
<dbReference type="GO" id="GO:0009535">
    <property type="term" value="C:chloroplast thylakoid membrane"/>
    <property type="evidence" value="ECO:0007669"/>
    <property type="project" value="UniProtKB-SubCell"/>
</dbReference>
<dbReference type="GO" id="GO:0008137">
    <property type="term" value="F:NADH dehydrogenase (ubiquinone) activity"/>
    <property type="evidence" value="ECO:0007669"/>
    <property type="project" value="InterPro"/>
</dbReference>
<dbReference type="GO" id="GO:0048038">
    <property type="term" value="F:quinone binding"/>
    <property type="evidence" value="ECO:0007669"/>
    <property type="project" value="UniProtKB-KW"/>
</dbReference>
<dbReference type="GO" id="GO:0042773">
    <property type="term" value="P:ATP synthesis coupled electron transport"/>
    <property type="evidence" value="ECO:0007669"/>
    <property type="project" value="InterPro"/>
</dbReference>
<dbReference type="GO" id="GO:0015990">
    <property type="term" value="P:electron transport coupled proton transport"/>
    <property type="evidence" value="ECO:0007669"/>
    <property type="project" value="TreeGrafter"/>
</dbReference>
<dbReference type="Gene3D" id="1.20.5.2700">
    <property type="match status" value="1"/>
</dbReference>
<dbReference type="InterPro" id="IPR002128">
    <property type="entry name" value="NADH_UbQ_OxRdtase_chlpt_su5_C"/>
</dbReference>
<dbReference type="InterPro" id="IPR018393">
    <property type="entry name" value="NADHpl_OxRdtase_5_subgr"/>
</dbReference>
<dbReference type="InterPro" id="IPR001750">
    <property type="entry name" value="ND/Mrp_TM"/>
</dbReference>
<dbReference type="InterPro" id="IPR003945">
    <property type="entry name" value="NU5C-like"/>
</dbReference>
<dbReference type="InterPro" id="IPR001516">
    <property type="entry name" value="Proton_antipo_N"/>
</dbReference>
<dbReference type="NCBIfam" id="TIGR01974">
    <property type="entry name" value="NDH_I_L"/>
    <property type="match status" value="1"/>
</dbReference>
<dbReference type="NCBIfam" id="NF005141">
    <property type="entry name" value="PRK06590.1"/>
    <property type="match status" value="1"/>
</dbReference>
<dbReference type="PANTHER" id="PTHR42829">
    <property type="entry name" value="NADH-UBIQUINONE OXIDOREDUCTASE CHAIN 5"/>
    <property type="match status" value="1"/>
</dbReference>
<dbReference type="PANTHER" id="PTHR42829:SF2">
    <property type="entry name" value="NADH-UBIQUINONE OXIDOREDUCTASE CHAIN 5"/>
    <property type="match status" value="1"/>
</dbReference>
<dbReference type="Pfam" id="PF01010">
    <property type="entry name" value="Proton_antipo_C"/>
    <property type="match status" value="1"/>
</dbReference>
<dbReference type="Pfam" id="PF00361">
    <property type="entry name" value="Proton_antipo_M"/>
    <property type="match status" value="1"/>
</dbReference>
<dbReference type="Pfam" id="PF00662">
    <property type="entry name" value="Proton_antipo_N"/>
    <property type="match status" value="1"/>
</dbReference>
<dbReference type="PRINTS" id="PR01434">
    <property type="entry name" value="NADHDHGNASE5"/>
</dbReference>
<dbReference type="PRINTS" id="PR01435">
    <property type="entry name" value="NPOXDRDTASE5"/>
</dbReference>
<reference key="1">
    <citation type="journal article" date="2008" name="BMC Plant Biol.">
        <title>Complete nucleotide sequence of the Cryptomeria japonica D. Don. chloroplast genome and comparative chloroplast genomics: diversified genomic structure of coniferous species.</title>
        <authorList>
            <person name="Hirao T."/>
            <person name="Watanabe A."/>
            <person name="Kurita M."/>
            <person name="Kondo T."/>
            <person name="Takata K."/>
        </authorList>
    </citation>
    <scope>NUCLEOTIDE SEQUENCE [LARGE SCALE GENOMIC DNA]</scope>
</reference>
<geneLocation type="chloroplast"/>
<feature type="chain" id="PRO_0000360927" description="NAD(P)H-quinone oxidoreductase subunit 5, chloroplastic">
    <location>
        <begin position="1"/>
        <end position="741"/>
    </location>
</feature>
<feature type="transmembrane region" description="Helical" evidence="2">
    <location>
        <begin position="9"/>
        <end position="29"/>
    </location>
</feature>
<feature type="transmembrane region" description="Helical" evidence="2">
    <location>
        <begin position="40"/>
        <end position="60"/>
    </location>
</feature>
<feature type="transmembrane region" description="Helical" evidence="2">
    <location>
        <begin position="89"/>
        <end position="109"/>
    </location>
</feature>
<feature type="transmembrane region" description="Helical" evidence="2">
    <location>
        <begin position="124"/>
        <end position="144"/>
    </location>
</feature>
<feature type="transmembrane region" description="Helical" evidence="2">
    <location>
        <begin position="147"/>
        <end position="167"/>
    </location>
</feature>
<feature type="transmembrane region" description="Helical" evidence="2">
    <location>
        <begin position="185"/>
        <end position="205"/>
    </location>
</feature>
<feature type="transmembrane region" description="Helical" evidence="2">
    <location>
        <begin position="218"/>
        <end position="238"/>
    </location>
</feature>
<feature type="transmembrane region" description="Helical" evidence="2">
    <location>
        <begin position="258"/>
        <end position="278"/>
    </location>
</feature>
<feature type="transmembrane region" description="Helical" evidence="2">
    <location>
        <begin position="286"/>
        <end position="306"/>
    </location>
</feature>
<feature type="transmembrane region" description="Helical" evidence="2">
    <location>
        <begin position="327"/>
        <end position="347"/>
    </location>
</feature>
<feature type="transmembrane region" description="Helical" evidence="2">
    <location>
        <begin position="354"/>
        <end position="374"/>
    </location>
</feature>
<feature type="transmembrane region" description="Helical" evidence="2">
    <location>
        <begin position="395"/>
        <end position="415"/>
    </location>
</feature>
<feature type="transmembrane region" description="Helical" evidence="2">
    <location>
        <begin position="427"/>
        <end position="447"/>
    </location>
</feature>
<feature type="transmembrane region" description="Helical" evidence="2">
    <location>
        <begin position="550"/>
        <end position="570"/>
    </location>
</feature>
<feature type="transmembrane region" description="Helical" evidence="2">
    <location>
        <begin position="601"/>
        <end position="621"/>
    </location>
</feature>
<feature type="transmembrane region" description="Helical" evidence="2">
    <location>
        <begin position="651"/>
        <end position="671"/>
    </location>
</feature>
<feature type="transmembrane region" description="Helical" evidence="2">
    <location>
        <begin position="687"/>
        <end position="707"/>
    </location>
</feature>
<feature type="transmembrane region" description="Helical" evidence="2">
    <location>
        <begin position="719"/>
        <end position="739"/>
    </location>
</feature>
<keyword id="KW-0150">Chloroplast</keyword>
<keyword id="KW-0472">Membrane</keyword>
<keyword id="KW-0520">NAD</keyword>
<keyword id="KW-0521">NADP</keyword>
<keyword id="KW-0934">Plastid</keyword>
<keyword id="KW-0618">Plastoquinone</keyword>
<keyword id="KW-0874">Quinone</keyword>
<keyword id="KW-0793">Thylakoid</keyword>
<keyword id="KW-1278">Translocase</keyword>
<keyword id="KW-0812">Transmembrane</keyword>
<keyword id="KW-1133">Transmembrane helix</keyword>
<keyword id="KW-0813">Transport</keyword>
<name>NU5C_CRYJA</name>
<proteinExistence type="inferred from homology"/>
<gene>
    <name type="primary">ndhF</name>
</gene>
<protein>
    <recommendedName>
        <fullName>NAD(P)H-quinone oxidoreductase subunit 5, chloroplastic</fullName>
        <ecNumber>7.1.1.-</ecNumber>
    </recommendedName>
    <alternativeName>
        <fullName>NAD(P)H dehydrogenase subunit 5</fullName>
    </alternativeName>
    <alternativeName>
        <fullName>NADH-plastoquinone oxidoreductase subunit 5</fullName>
    </alternativeName>
</protein>
<accession>B1VKJ3</accession>